<gene>
    <name type="primary">Mat2b</name>
</gene>
<evidence type="ECO:0000250" key="1">
    <source>
        <dbReference type="UniProtKB" id="Q9NZL9"/>
    </source>
</evidence>
<evidence type="ECO:0000303" key="2">
    <source>
    </source>
</evidence>
<evidence type="ECO:0000305" key="3"/>
<feature type="chain" id="PRO_0000287521" description="Methionine adenosyltransferase 2 subunit beta">
    <location>
        <begin position="1"/>
        <end position="334"/>
    </location>
</feature>
<feature type="region of interest" description="Required for interaction with MAT2A" evidence="1">
    <location>
        <begin position="319"/>
        <end position="334"/>
    </location>
</feature>
<feature type="binding site" evidence="1">
    <location>
        <begin position="37"/>
        <end position="40"/>
    </location>
    <ligand>
        <name>NADP(+)</name>
        <dbReference type="ChEBI" id="CHEBI:58349"/>
    </ligand>
</feature>
<feature type="binding site" evidence="1">
    <location>
        <begin position="60"/>
        <end position="62"/>
    </location>
    <ligand>
        <name>NADP(+)</name>
        <dbReference type="ChEBI" id="CHEBI:58349"/>
    </ligand>
</feature>
<feature type="binding site" evidence="1">
    <location>
        <begin position="71"/>
        <end position="72"/>
    </location>
    <ligand>
        <name>NADP(+)</name>
        <dbReference type="ChEBI" id="CHEBI:58349"/>
    </ligand>
</feature>
<feature type="binding site" evidence="1">
    <location>
        <position position="93"/>
    </location>
    <ligand>
        <name>NADP(+)</name>
        <dbReference type="ChEBI" id="CHEBI:58349"/>
    </ligand>
</feature>
<feature type="binding site" evidence="1">
    <location>
        <position position="97"/>
    </location>
    <ligand>
        <name>NADP(+)</name>
        <dbReference type="ChEBI" id="CHEBI:58349"/>
    </ligand>
</feature>
<feature type="binding site" evidence="1">
    <location>
        <position position="159"/>
    </location>
    <ligand>
        <name>NADP(+)</name>
        <dbReference type="ChEBI" id="CHEBI:58349"/>
    </ligand>
</feature>
<feature type="binding site" evidence="1">
    <location>
        <position position="185"/>
    </location>
    <ligand>
        <name>NADP(+)</name>
        <dbReference type="ChEBI" id="CHEBI:58349"/>
    </ligand>
</feature>
<feature type="modified residue" description="Phosphothreonine" evidence="1">
    <location>
        <position position="309"/>
    </location>
</feature>
<feature type="splice variant" id="VSP_025541" description="In isoform 2." evidence="2">
    <original>MVGREKELSIHFVPGCCQLVE</original>
    <variation>MPEMPEAMEQ</variation>
    <location>
        <begin position="1"/>
        <end position="21"/>
    </location>
</feature>
<feature type="sequence conflict" description="In Ref. 1; BAD06938." evidence="3" ref="1">
    <original>R</original>
    <variation>G</variation>
    <location>
        <position position="97"/>
    </location>
</feature>
<feature type="sequence conflict" description="In Ref. 1; BAD06938." evidence="3" ref="1">
    <original>F</original>
    <variation>L</variation>
    <location>
        <position position="140"/>
    </location>
</feature>
<feature type="sequence conflict" description="In Ref. 1; BAD06938." evidence="3" ref="1">
    <original>V</original>
    <variation>A</variation>
    <location>
        <position position="170"/>
    </location>
</feature>
<accession>Q99LB6</accession>
<accession>Q5NC89</accession>
<accession>Q76LX2</accession>
<accession>Q8BVX6</accession>
<accession>Q8BYT9</accession>
<dbReference type="EMBL" id="AB070267">
    <property type="protein sequence ID" value="BAD06938.1"/>
    <property type="molecule type" value="mRNA"/>
</dbReference>
<dbReference type="EMBL" id="AK038303">
    <property type="protein sequence ID" value="BAC29963.1"/>
    <property type="status" value="ALT_SEQ"/>
    <property type="molecule type" value="mRNA"/>
</dbReference>
<dbReference type="EMBL" id="AK075947">
    <property type="protein sequence ID" value="BAC36076.1"/>
    <property type="molecule type" value="mRNA"/>
</dbReference>
<dbReference type="EMBL" id="AK162087">
    <property type="protein sequence ID" value="BAE36716.1"/>
    <property type="molecule type" value="mRNA"/>
</dbReference>
<dbReference type="EMBL" id="AL646055">
    <property type="protein sequence ID" value="CAI25424.1"/>
    <property type="status" value="ALT_SEQ"/>
    <property type="molecule type" value="Genomic_DNA"/>
</dbReference>
<dbReference type="EMBL" id="AL646055">
    <property type="protein sequence ID" value="CAI25422.1"/>
    <property type="molecule type" value="Genomic_DNA"/>
</dbReference>
<dbReference type="EMBL" id="AL646055">
    <property type="protein sequence ID" value="CAI25423.1"/>
    <property type="molecule type" value="Genomic_DNA"/>
</dbReference>
<dbReference type="EMBL" id="BC003457">
    <property type="protein sequence ID" value="AAH03457.1"/>
    <property type="molecule type" value="mRNA"/>
</dbReference>
<dbReference type="CCDS" id="CCDS24547.1">
    <molecule id="Q99LB6-1"/>
</dbReference>
<dbReference type="CCDS" id="CCDS56767.1">
    <molecule id="Q99LB6-2"/>
</dbReference>
<dbReference type="RefSeq" id="NP_001186203.1">
    <molecule id="Q99LB6-2"/>
    <property type="nucleotide sequence ID" value="NM_001199274.1"/>
</dbReference>
<dbReference type="RefSeq" id="NP_598778.1">
    <molecule id="Q99LB6-1"/>
    <property type="nucleotide sequence ID" value="NM_134017.2"/>
</dbReference>
<dbReference type="SMR" id="Q99LB6"/>
<dbReference type="BioGRID" id="224352">
    <property type="interactions" value="18"/>
</dbReference>
<dbReference type="FunCoup" id="Q99LB6">
    <property type="interactions" value="1914"/>
</dbReference>
<dbReference type="IntAct" id="Q99LB6">
    <property type="interactions" value="1"/>
</dbReference>
<dbReference type="STRING" id="10090.ENSMUSP00000048222"/>
<dbReference type="GlyGen" id="Q99LB6">
    <property type="glycosylation" value="1 site, 1 O-linked glycan (1 site)"/>
</dbReference>
<dbReference type="iPTMnet" id="Q99LB6"/>
<dbReference type="PhosphoSitePlus" id="Q99LB6"/>
<dbReference type="SwissPalm" id="Q99LB6"/>
<dbReference type="REPRODUCTION-2DPAGE" id="IPI00649402"/>
<dbReference type="REPRODUCTION-2DPAGE" id="Q99LB6"/>
<dbReference type="jPOST" id="Q99LB6"/>
<dbReference type="PaxDb" id="10090-ENSMUSP00000048222"/>
<dbReference type="PeptideAtlas" id="Q99LB6"/>
<dbReference type="ProteomicsDB" id="293413">
    <molecule id="Q99LB6-1"/>
</dbReference>
<dbReference type="ProteomicsDB" id="293414">
    <molecule id="Q99LB6-2"/>
</dbReference>
<dbReference type="Pumba" id="Q99LB6"/>
<dbReference type="Antibodypedia" id="28655">
    <property type="antibodies" value="238 antibodies from 29 providers"/>
</dbReference>
<dbReference type="DNASU" id="108645"/>
<dbReference type="Ensembl" id="ENSMUST00000040167.11">
    <molecule id="Q99LB6-1"/>
    <property type="protein sequence ID" value="ENSMUSP00000048222.5"/>
    <property type="gene ID" value="ENSMUSG00000042032.14"/>
</dbReference>
<dbReference type="Ensembl" id="ENSMUST00000101347.10">
    <molecule id="Q99LB6-2"/>
    <property type="protein sequence ID" value="ENSMUSP00000098901.4"/>
    <property type="gene ID" value="ENSMUSG00000042032.14"/>
</dbReference>
<dbReference type="GeneID" id="108645"/>
<dbReference type="KEGG" id="mmu:108645"/>
<dbReference type="UCSC" id="uc007ilp.2">
    <molecule id="Q99LB6-1"/>
    <property type="organism name" value="mouse"/>
</dbReference>
<dbReference type="UCSC" id="uc007ilq.2">
    <molecule id="Q99LB6-2"/>
    <property type="organism name" value="mouse"/>
</dbReference>
<dbReference type="AGR" id="MGI:1913667"/>
<dbReference type="CTD" id="27430"/>
<dbReference type="MGI" id="MGI:1913667">
    <property type="gene designation" value="Mat2b"/>
</dbReference>
<dbReference type="VEuPathDB" id="HostDB:ENSMUSG00000042032"/>
<dbReference type="eggNOG" id="KOG1430">
    <property type="taxonomic scope" value="Eukaryota"/>
</dbReference>
<dbReference type="GeneTree" id="ENSGT00390000006721"/>
<dbReference type="HOGENOM" id="CLU_045518_0_0_1"/>
<dbReference type="InParanoid" id="Q99LB6"/>
<dbReference type="OMA" id="IRTAWVY"/>
<dbReference type="OrthoDB" id="6235964at2759"/>
<dbReference type="PhylomeDB" id="Q99LB6"/>
<dbReference type="TreeFam" id="TF332849"/>
<dbReference type="Reactome" id="R-MMU-156581">
    <property type="pathway name" value="Methylation"/>
</dbReference>
<dbReference type="Reactome" id="R-MMU-5689880">
    <property type="pathway name" value="Ub-specific processing proteases"/>
</dbReference>
<dbReference type="UniPathway" id="UPA00315">
    <property type="reaction ID" value="UER00080"/>
</dbReference>
<dbReference type="BioGRID-ORCS" id="108645">
    <property type="hits" value="1 hit in 76 CRISPR screens"/>
</dbReference>
<dbReference type="ChiTaRS" id="Mat2b">
    <property type="organism name" value="mouse"/>
</dbReference>
<dbReference type="PRO" id="PR:Q99LB6"/>
<dbReference type="Proteomes" id="UP000000589">
    <property type="component" value="Chromosome 11"/>
</dbReference>
<dbReference type="RNAct" id="Q99LB6">
    <property type="molecule type" value="protein"/>
</dbReference>
<dbReference type="Bgee" id="ENSMUSG00000042032">
    <property type="expression patterns" value="Expressed in animal zygote and 257 other cell types or tissues"/>
</dbReference>
<dbReference type="ExpressionAtlas" id="Q99LB6">
    <property type="expression patterns" value="baseline and differential"/>
</dbReference>
<dbReference type="GO" id="GO:0048269">
    <property type="term" value="C:methionine adenosyltransferase complex"/>
    <property type="evidence" value="ECO:0000250"/>
    <property type="project" value="UniProtKB"/>
</dbReference>
<dbReference type="GO" id="GO:0005739">
    <property type="term" value="C:mitochondrion"/>
    <property type="evidence" value="ECO:0007005"/>
    <property type="project" value="MGI"/>
</dbReference>
<dbReference type="GO" id="GO:0005634">
    <property type="term" value="C:nucleus"/>
    <property type="evidence" value="ECO:0007669"/>
    <property type="project" value="Ensembl"/>
</dbReference>
<dbReference type="GO" id="GO:0019899">
    <property type="term" value="F:enzyme binding"/>
    <property type="evidence" value="ECO:0007669"/>
    <property type="project" value="Ensembl"/>
</dbReference>
<dbReference type="GO" id="GO:0048270">
    <property type="term" value="F:methionine adenosyltransferase regulator activity"/>
    <property type="evidence" value="ECO:0000250"/>
    <property type="project" value="UniProtKB"/>
</dbReference>
<dbReference type="GO" id="GO:0006730">
    <property type="term" value="P:one-carbon metabolic process"/>
    <property type="evidence" value="ECO:0007669"/>
    <property type="project" value="UniProtKB-KW"/>
</dbReference>
<dbReference type="GO" id="GO:0006556">
    <property type="term" value="P:S-adenosylmethionine biosynthetic process"/>
    <property type="evidence" value="ECO:0000250"/>
    <property type="project" value="UniProtKB"/>
</dbReference>
<dbReference type="CDD" id="cd05254">
    <property type="entry name" value="dTDP_HR_like_SDR_e"/>
    <property type="match status" value="1"/>
</dbReference>
<dbReference type="FunFam" id="3.40.50.720:FF:000133">
    <property type="entry name" value="Methionine adenosyltransferase 2 subunit beta"/>
    <property type="match status" value="1"/>
</dbReference>
<dbReference type="Gene3D" id="3.40.50.720">
    <property type="entry name" value="NAD(P)-binding Rossmann-like Domain"/>
    <property type="match status" value="1"/>
</dbReference>
<dbReference type="InterPro" id="IPR005913">
    <property type="entry name" value="dTDP_dehydrorham_reduct"/>
</dbReference>
<dbReference type="InterPro" id="IPR036291">
    <property type="entry name" value="NAD(P)-bd_dom_sf"/>
</dbReference>
<dbReference type="InterPro" id="IPR029903">
    <property type="entry name" value="RmlD-like-bd"/>
</dbReference>
<dbReference type="PANTHER" id="PTHR10491">
    <property type="entry name" value="DTDP-4-DEHYDRORHAMNOSE REDUCTASE"/>
    <property type="match status" value="1"/>
</dbReference>
<dbReference type="PANTHER" id="PTHR10491:SF4">
    <property type="entry name" value="METHIONINE ADENOSYLTRANSFERASE 2 SUBUNIT BETA"/>
    <property type="match status" value="1"/>
</dbReference>
<dbReference type="Pfam" id="PF04321">
    <property type="entry name" value="RmlD_sub_bind"/>
    <property type="match status" value="1"/>
</dbReference>
<dbReference type="SUPFAM" id="SSF51735">
    <property type="entry name" value="NAD(P)-binding Rossmann-fold domains"/>
    <property type="match status" value="1"/>
</dbReference>
<name>MAT2B_MOUSE</name>
<proteinExistence type="evidence at protein level"/>
<protein>
    <recommendedName>
        <fullName>Methionine adenosyltransferase 2 subunit beta</fullName>
    </recommendedName>
    <alternativeName>
        <fullName>Methionine adenosyltransferase II beta</fullName>
        <shortName>MAT II beta</shortName>
    </alternativeName>
</protein>
<sequence length="334" mass="37393">MVGREKELSIHFVPGCCQLVEEEVNIPSRRVLITGATGLLGRAVYKEFQQSNWHTVGCGFRRARPKFEQVNLLDSEAVHHLIHDFQPHVIVHCAAERRPDVVESQPDAASQLNVGASGNLAKEAAAIGAFLIYISSDYVFDGTNPPYTEEDIPSPLNLYGKTKLDGEKAVLENNLGAAVLRIPVLYGEVEKLEESAVTVMFDKVQFSNKSANMDHWQQRFPTHVKDVASVCRQLAEKRMLDPSIKGTFHWSGNEQMTKYEMACAIADAFNLPSSHLRPITDSPVIGAQRPKNAQLDCSKLETLGIGQRTPFRTGIKESLWPFLIDKRWRQTVFH</sequence>
<keyword id="KW-0025">Alternative splicing</keyword>
<keyword id="KW-0521">NADP</keyword>
<keyword id="KW-0554">One-carbon metabolism</keyword>
<keyword id="KW-0597">Phosphoprotein</keyword>
<keyword id="KW-1185">Reference proteome</keyword>
<organism>
    <name type="scientific">Mus musculus</name>
    <name type="common">Mouse</name>
    <dbReference type="NCBI Taxonomy" id="10090"/>
    <lineage>
        <taxon>Eukaryota</taxon>
        <taxon>Metazoa</taxon>
        <taxon>Chordata</taxon>
        <taxon>Craniata</taxon>
        <taxon>Vertebrata</taxon>
        <taxon>Euteleostomi</taxon>
        <taxon>Mammalia</taxon>
        <taxon>Eutheria</taxon>
        <taxon>Euarchontoglires</taxon>
        <taxon>Glires</taxon>
        <taxon>Rodentia</taxon>
        <taxon>Myomorpha</taxon>
        <taxon>Muroidea</taxon>
        <taxon>Muridae</taxon>
        <taxon>Murinae</taxon>
        <taxon>Mus</taxon>
        <taxon>Mus</taxon>
    </lineage>
</organism>
<reference key="1">
    <citation type="journal article" date="2005" name="J. Nutr. Sci. Vitaminol.">
        <title>Effect of fasting on methionine adenosyltransferase expression and the methionine cycle in the mouse liver.</title>
        <authorList>
            <person name="Sakata S.F."/>
            <person name="Okumura S."/>
            <person name="Matsuda K."/>
            <person name="Horikawa Y."/>
            <person name="Maeda M."/>
            <person name="Kawasaki K."/>
            <person name="Chou J.Y."/>
            <person name="Tamaki N."/>
        </authorList>
    </citation>
    <scope>NUCLEOTIDE SEQUENCE [MRNA] (ISOFORM 1)</scope>
    <source>
        <strain>ddY</strain>
        <tissue>Kidney</tissue>
    </source>
</reference>
<reference key="2">
    <citation type="journal article" date="2005" name="Science">
        <title>The transcriptional landscape of the mammalian genome.</title>
        <authorList>
            <person name="Carninci P."/>
            <person name="Kasukawa T."/>
            <person name="Katayama S."/>
            <person name="Gough J."/>
            <person name="Frith M.C."/>
            <person name="Maeda N."/>
            <person name="Oyama R."/>
            <person name="Ravasi T."/>
            <person name="Lenhard B."/>
            <person name="Wells C."/>
            <person name="Kodzius R."/>
            <person name="Shimokawa K."/>
            <person name="Bajic V.B."/>
            <person name="Brenner S.E."/>
            <person name="Batalov S."/>
            <person name="Forrest A.R."/>
            <person name="Zavolan M."/>
            <person name="Davis M.J."/>
            <person name="Wilming L.G."/>
            <person name="Aidinis V."/>
            <person name="Allen J.E."/>
            <person name="Ambesi-Impiombato A."/>
            <person name="Apweiler R."/>
            <person name="Aturaliya R.N."/>
            <person name="Bailey T.L."/>
            <person name="Bansal M."/>
            <person name="Baxter L."/>
            <person name="Beisel K.W."/>
            <person name="Bersano T."/>
            <person name="Bono H."/>
            <person name="Chalk A.M."/>
            <person name="Chiu K.P."/>
            <person name="Choudhary V."/>
            <person name="Christoffels A."/>
            <person name="Clutterbuck D.R."/>
            <person name="Crowe M.L."/>
            <person name="Dalla E."/>
            <person name="Dalrymple B.P."/>
            <person name="de Bono B."/>
            <person name="Della Gatta G."/>
            <person name="di Bernardo D."/>
            <person name="Down T."/>
            <person name="Engstrom P."/>
            <person name="Fagiolini M."/>
            <person name="Faulkner G."/>
            <person name="Fletcher C.F."/>
            <person name="Fukushima T."/>
            <person name="Furuno M."/>
            <person name="Futaki S."/>
            <person name="Gariboldi M."/>
            <person name="Georgii-Hemming P."/>
            <person name="Gingeras T.R."/>
            <person name="Gojobori T."/>
            <person name="Green R.E."/>
            <person name="Gustincich S."/>
            <person name="Harbers M."/>
            <person name="Hayashi Y."/>
            <person name="Hensch T.K."/>
            <person name="Hirokawa N."/>
            <person name="Hill D."/>
            <person name="Huminiecki L."/>
            <person name="Iacono M."/>
            <person name="Ikeo K."/>
            <person name="Iwama A."/>
            <person name="Ishikawa T."/>
            <person name="Jakt M."/>
            <person name="Kanapin A."/>
            <person name="Katoh M."/>
            <person name="Kawasawa Y."/>
            <person name="Kelso J."/>
            <person name="Kitamura H."/>
            <person name="Kitano H."/>
            <person name="Kollias G."/>
            <person name="Krishnan S.P."/>
            <person name="Kruger A."/>
            <person name="Kummerfeld S.K."/>
            <person name="Kurochkin I.V."/>
            <person name="Lareau L.F."/>
            <person name="Lazarevic D."/>
            <person name="Lipovich L."/>
            <person name="Liu J."/>
            <person name="Liuni S."/>
            <person name="McWilliam S."/>
            <person name="Madan Babu M."/>
            <person name="Madera M."/>
            <person name="Marchionni L."/>
            <person name="Matsuda H."/>
            <person name="Matsuzawa S."/>
            <person name="Miki H."/>
            <person name="Mignone F."/>
            <person name="Miyake S."/>
            <person name="Morris K."/>
            <person name="Mottagui-Tabar S."/>
            <person name="Mulder N."/>
            <person name="Nakano N."/>
            <person name="Nakauchi H."/>
            <person name="Ng P."/>
            <person name="Nilsson R."/>
            <person name="Nishiguchi S."/>
            <person name="Nishikawa S."/>
            <person name="Nori F."/>
            <person name="Ohara O."/>
            <person name="Okazaki Y."/>
            <person name="Orlando V."/>
            <person name="Pang K.C."/>
            <person name="Pavan W.J."/>
            <person name="Pavesi G."/>
            <person name="Pesole G."/>
            <person name="Petrovsky N."/>
            <person name="Piazza S."/>
            <person name="Reed J."/>
            <person name="Reid J.F."/>
            <person name="Ring B.Z."/>
            <person name="Ringwald M."/>
            <person name="Rost B."/>
            <person name="Ruan Y."/>
            <person name="Salzberg S.L."/>
            <person name="Sandelin A."/>
            <person name="Schneider C."/>
            <person name="Schoenbach C."/>
            <person name="Sekiguchi K."/>
            <person name="Semple C.A."/>
            <person name="Seno S."/>
            <person name="Sessa L."/>
            <person name="Sheng Y."/>
            <person name="Shibata Y."/>
            <person name="Shimada H."/>
            <person name="Shimada K."/>
            <person name="Silva D."/>
            <person name="Sinclair B."/>
            <person name="Sperling S."/>
            <person name="Stupka E."/>
            <person name="Sugiura K."/>
            <person name="Sultana R."/>
            <person name="Takenaka Y."/>
            <person name="Taki K."/>
            <person name="Tammoja K."/>
            <person name="Tan S.L."/>
            <person name="Tang S."/>
            <person name="Taylor M.S."/>
            <person name="Tegner J."/>
            <person name="Teichmann S.A."/>
            <person name="Ueda H.R."/>
            <person name="van Nimwegen E."/>
            <person name="Verardo R."/>
            <person name="Wei C.L."/>
            <person name="Yagi K."/>
            <person name="Yamanishi H."/>
            <person name="Zabarovsky E."/>
            <person name="Zhu S."/>
            <person name="Zimmer A."/>
            <person name="Hide W."/>
            <person name="Bult C."/>
            <person name="Grimmond S.M."/>
            <person name="Teasdale R.D."/>
            <person name="Liu E.T."/>
            <person name="Brusic V."/>
            <person name="Quackenbush J."/>
            <person name="Wahlestedt C."/>
            <person name="Mattick J.S."/>
            <person name="Hume D.A."/>
            <person name="Kai C."/>
            <person name="Sasaki D."/>
            <person name="Tomaru Y."/>
            <person name="Fukuda S."/>
            <person name="Kanamori-Katayama M."/>
            <person name="Suzuki M."/>
            <person name="Aoki J."/>
            <person name="Arakawa T."/>
            <person name="Iida J."/>
            <person name="Imamura K."/>
            <person name="Itoh M."/>
            <person name="Kato T."/>
            <person name="Kawaji H."/>
            <person name="Kawagashira N."/>
            <person name="Kawashima T."/>
            <person name="Kojima M."/>
            <person name="Kondo S."/>
            <person name="Konno H."/>
            <person name="Nakano K."/>
            <person name="Ninomiya N."/>
            <person name="Nishio T."/>
            <person name="Okada M."/>
            <person name="Plessy C."/>
            <person name="Shibata K."/>
            <person name="Shiraki T."/>
            <person name="Suzuki S."/>
            <person name="Tagami M."/>
            <person name="Waki K."/>
            <person name="Watahiki A."/>
            <person name="Okamura-Oho Y."/>
            <person name="Suzuki H."/>
            <person name="Kawai J."/>
            <person name="Hayashizaki Y."/>
        </authorList>
    </citation>
    <scope>NUCLEOTIDE SEQUENCE [LARGE SCALE MRNA] (ISOFORM 2)</scope>
    <scope>NUCLEOTIDE SEQUENCE [LARGE SCALE MRNA] OF 1-86 (ISOFORM 1)</scope>
    <source>
        <strain>C57BL/6J</strain>
        <tissue>Egg</tissue>
    </source>
</reference>
<reference key="3">
    <citation type="journal article" date="2009" name="PLoS Biol.">
        <title>Lineage-specific biology revealed by a finished genome assembly of the mouse.</title>
        <authorList>
            <person name="Church D.M."/>
            <person name="Goodstadt L."/>
            <person name="Hillier L.W."/>
            <person name="Zody M.C."/>
            <person name="Goldstein S."/>
            <person name="She X."/>
            <person name="Bult C.J."/>
            <person name="Agarwala R."/>
            <person name="Cherry J.L."/>
            <person name="DiCuccio M."/>
            <person name="Hlavina W."/>
            <person name="Kapustin Y."/>
            <person name="Meric P."/>
            <person name="Maglott D."/>
            <person name="Birtle Z."/>
            <person name="Marques A.C."/>
            <person name="Graves T."/>
            <person name="Zhou S."/>
            <person name="Teague B."/>
            <person name="Potamousis K."/>
            <person name="Churas C."/>
            <person name="Place M."/>
            <person name="Herschleb J."/>
            <person name="Runnheim R."/>
            <person name="Forrest D."/>
            <person name="Amos-Landgraf J."/>
            <person name="Schwartz D.C."/>
            <person name="Cheng Z."/>
            <person name="Lindblad-Toh K."/>
            <person name="Eichler E.E."/>
            <person name="Ponting C.P."/>
        </authorList>
    </citation>
    <scope>NUCLEOTIDE SEQUENCE [LARGE SCALE GENOMIC DNA]</scope>
    <source>
        <strain>C57BL/6J</strain>
    </source>
</reference>
<reference key="4">
    <citation type="journal article" date="2004" name="Genome Res.">
        <title>The status, quality, and expansion of the NIH full-length cDNA project: the Mammalian Gene Collection (MGC).</title>
        <authorList>
            <consortium name="The MGC Project Team"/>
        </authorList>
    </citation>
    <scope>NUCLEOTIDE SEQUENCE [LARGE SCALE MRNA] (ISOFORM 1)</scope>
    <source>
        <strain>FVB/N</strain>
        <tissue>Mammary tumor</tissue>
    </source>
</reference>
<reference key="5">
    <citation type="journal article" date="2010" name="Cell">
        <title>A tissue-specific atlas of mouse protein phosphorylation and expression.</title>
        <authorList>
            <person name="Huttlin E.L."/>
            <person name="Jedrychowski M.P."/>
            <person name="Elias J.E."/>
            <person name="Goswami T."/>
            <person name="Rad R."/>
            <person name="Beausoleil S.A."/>
            <person name="Villen J."/>
            <person name="Haas W."/>
            <person name="Sowa M.E."/>
            <person name="Gygi S.P."/>
        </authorList>
    </citation>
    <scope>IDENTIFICATION BY MASS SPECTROMETRY [LARGE SCALE ANALYSIS]</scope>
    <source>
        <tissue>Brain</tissue>
        <tissue>Brown adipose tissue</tissue>
        <tissue>Heart</tissue>
        <tissue>Kidney</tissue>
        <tissue>Liver</tissue>
        <tissue>Lung</tissue>
        <tissue>Pancreas</tissue>
        <tissue>Spleen</tissue>
        <tissue>Testis</tissue>
    </source>
</reference>
<comment type="function">
    <text evidence="1">Regulatory subunit of S-adenosylmethionine synthetase 2, an enzyme that catalyzes the formation of S-adenosylmethionine from methionine and ATP. Regulates MAT2A catalytic activity by changing its kinetic properties, increasing its affinity for L-methionine. Can bind NADP (in vitro).</text>
</comment>
<comment type="pathway">
    <text evidence="1">Amino-acid biosynthesis; S-adenosyl-L-methionine biosynthesis; S-adenosyl-L-methionine from L-methionine: step 1/1.</text>
</comment>
<comment type="subunit">
    <text evidence="1">Heterotrimer; composed of a catalytic MAT2A homodimer that binds one regulatory MAT2B chain. Heterohexamer; composed of a central, catalytic MAT2A homotetramer flanked on either side by a regulatory MAT2B chain. NADP binding increases the affinity for MAT2A.</text>
</comment>
<comment type="alternative products">
    <event type="alternative splicing"/>
    <isoform>
        <id>Q99LB6-1</id>
        <name>1</name>
        <sequence type="displayed"/>
    </isoform>
    <isoform>
        <id>Q99LB6-2</id>
        <name>2</name>
        <sequence type="described" ref="VSP_025541"/>
    </isoform>
</comment>
<comment type="similarity">
    <text evidence="3">Belongs to the dTDP-4-dehydrorhamnose reductase family. MAT2B subfamily.</text>
</comment>
<comment type="sequence caution" evidence="3">
    <conflict type="miscellaneous discrepancy">
        <sequence resource="EMBL-CDS" id="BAC29963"/>
    </conflict>
    <text>Intron retention.</text>
</comment>
<comment type="sequence caution" evidence="3">
    <conflict type="erroneous gene model prediction">
        <sequence resource="EMBL-CDS" id="CAI25424"/>
    </conflict>
</comment>